<evidence type="ECO:0000250" key="1"/>
<evidence type="ECO:0000250" key="2">
    <source>
        <dbReference type="UniProtKB" id="P00157"/>
    </source>
</evidence>
<evidence type="ECO:0000255" key="3">
    <source>
        <dbReference type="PROSITE-ProRule" id="PRU00967"/>
    </source>
</evidence>
<evidence type="ECO:0000255" key="4">
    <source>
        <dbReference type="PROSITE-ProRule" id="PRU00968"/>
    </source>
</evidence>
<gene>
    <name type="primary">MT-CYB</name>
    <name type="synonym">COB</name>
    <name type="synonym">CYTB</name>
    <name type="synonym">MTCYB</name>
</gene>
<name>CYB_TAMDO</name>
<keyword id="KW-0249">Electron transport</keyword>
<keyword id="KW-0349">Heme</keyword>
<keyword id="KW-0408">Iron</keyword>
<keyword id="KW-0472">Membrane</keyword>
<keyword id="KW-0479">Metal-binding</keyword>
<keyword id="KW-0496">Mitochondrion</keyword>
<keyword id="KW-0999">Mitochondrion inner membrane</keyword>
<keyword id="KW-0679">Respiratory chain</keyword>
<keyword id="KW-0812">Transmembrane</keyword>
<keyword id="KW-1133">Transmembrane helix</keyword>
<keyword id="KW-0813">Transport</keyword>
<keyword id="KW-0830">Ubiquinone</keyword>
<geneLocation type="mitochondrion"/>
<dbReference type="EMBL" id="AF157924">
    <property type="protein sequence ID" value="AAD50208.1"/>
    <property type="molecule type" value="Genomic_DNA"/>
</dbReference>
<dbReference type="GO" id="GO:0005743">
    <property type="term" value="C:mitochondrial inner membrane"/>
    <property type="evidence" value="ECO:0007669"/>
    <property type="project" value="UniProtKB-SubCell"/>
</dbReference>
<dbReference type="GO" id="GO:0045275">
    <property type="term" value="C:respiratory chain complex III"/>
    <property type="evidence" value="ECO:0007669"/>
    <property type="project" value="InterPro"/>
</dbReference>
<dbReference type="GO" id="GO:0046872">
    <property type="term" value="F:metal ion binding"/>
    <property type="evidence" value="ECO:0007669"/>
    <property type="project" value="UniProtKB-KW"/>
</dbReference>
<dbReference type="GO" id="GO:0008121">
    <property type="term" value="F:ubiquinol-cytochrome-c reductase activity"/>
    <property type="evidence" value="ECO:0007669"/>
    <property type="project" value="InterPro"/>
</dbReference>
<dbReference type="GO" id="GO:0006122">
    <property type="term" value="P:mitochondrial electron transport, ubiquinol to cytochrome c"/>
    <property type="evidence" value="ECO:0007669"/>
    <property type="project" value="TreeGrafter"/>
</dbReference>
<dbReference type="CDD" id="cd00290">
    <property type="entry name" value="cytochrome_b_C"/>
    <property type="match status" value="1"/>
</dbReference>
<dbReference type="CDD" id="cd00284">
    <property type="entry name" value="Cytochrome_b_N"/>
    <property type="match status" value="1"/>
</dbReference>
<dbReference type="FunFam" id="1.20.810.10:FF:000002">
    <property type="entry name" value="Cytochrome b"/>
    <property type="match status" value="1"/>
</dbReference>
<dbReference type="Gene3D" id="1.20.810.10">
    <property type="entry name" value="Cytochrome Bc1 Complex, Chain C"/>
    <property type="match status" value="1"/>
</dbReference>
<dbReference type="InterPro" id="IPR005798">
    <property type="entry name" value="Cyt_b/b6_C"/>
</dbReference>
<dbReference type="InterPro" id="IPR036150">
    <property type="entry name" value="Cyt_b/b6_C_sf"/>
</dbReference>
<dbReference type="InterPro" id="IPR005797">
    <property type="entry name" value="Cyt_b/b6_N"/>
</dbReference>
<dbReference type="InterPro" id="IPR027387">
    <property type="entry name" value="Cytb/b6-like_sf"/>
</dbReference>
<dbReference type="InterPro" id="IPR030689">
    <property type="entry name" value="Cytochrome_b"/>
</dbReference>
<dbReference type="InterPro" id="IPR048260">
    <property type="entry name" value="Cytochrome_b_C_euk/bac"/>
</dbReference>
<dbReference type="InterPro" id="IPR048259">
    <property type="entry name" value="Cytochrome_b_N_euk/bac"/>
</dbReference>
<dbReference type="InterPro" id="IPR016174">
    <property type="entry name" value="Di-haem_cyt_TM"/>
</dbReference>
<dbReference type="PANTHER" id="PTHR19271">
    <property type="entry name" value="CYTOCHROME B"/>
    <property type="match status" value="1"/>
</dbReference>
<dbReference type="PANTHER" id="PTHR19271:SF16">
    <property type="entry name" value="CYTOCHROME B"/>
    <property type="match status" value="1"/>
</dbReference>
<dbReference type="Pfam" id="PF00032">
    <property type="entry name" value="Cytochrom_B_C"/>
    <property type="match status" value="1"/>
</dbReference>
<dbReference type="Pfam" id="PF00033">
    <property type="entry name" value="Cytochrome_B"/>
    <property type="match status" value="1"/>
</dbReference>
<dbReference type="PIRSF" id="PIRSF038885">
    <property type="entry name" value="COB"/>
    <property type="match status" value="1"/>
</dbReference>
<dbReference type="SUPFAM" id="SSF81648">
    <property type="entry name" value="a domain/subunit of cytochrome bc1 complex (Ubiquinol-cytochrome c reductase)"/>
    <property type="match status" value="1"/>
</dbReference>
<dbReference type="SUPFAM" id="SSF81342">
    <property type="entry name" value="Transmembrane di-heme cytochromes"/>
    <property type="match status" value="1"/>
</dbReference>
<dbReference type="PROSITE" id="PS51003">
    <property type="entry name" value="CYTB_CTER"/>
    <property type="match status" value="1"/>
</dbReference>
<dbReference type="PROSITE" id="PS51002">
    <property type="entry name" value="CYTB_NTER"/>
    <property type="match status" value="1"/>
</dbReference>
<feature type="chain" id="PRO_0000060967" description="Cytochrome b">
    <location>
        <begin position="1"/>
        <end position="379"/>
    </location>
</feature>
<feature type="transmembrane region" description="Helical" evidence="2">
    <location>
        <begin position="33"/>
        <end position="53"/>
    </location>
</feature>
<feature type="transmembrane region" description="Helical" evidence="2">
    <location>
        <begin position="77"/>
        <end position="98"/>
    </location>
</feature>
<feature type="transmembrane region" description="Helical" evidence="2">
    <location>
        <begin position="113"/>
        <end position="133"/>
    </location>
</feature>
<feature type="transmembrane region" description="Helical" evidence="2">
    <location>
        <begin position="178"/>
        <end position="198"/>
    </location>
</feature>
<feature type="transmembrane region" description="Helical" evidence="2">
    <location>
        <begin position="226"/>
        <end position="246"/>
    </location>
</feature>
<feature type="transmembrane region" description="Helical" evidence="2">
    <location>
        <begin position="288"/>
        <end position="308"/>
    </location>
</feature>
<feature type="transmembrane region" description="Helical" evidence="2">
    <location>
        <begin position="320"/>
        <end position="340"/>
    </location>
</feature>
<feature type="transmembrane region" description="Helical" evidence="2">
    <location>
        <begin position="347"/>
        <end position="367"/>
    </location>
</feature>
<feature type="binding site" description="axial binding residue" evidence="2">
    <location>
        <position position="83"/>
    </location>
    <ligand>
        <name>heme b</name>
        <dbReference type="ChEBI" id="CHEBI:60344"/>
        <label>b562</label>
    </ligand>
    <ligandPart>
        <name>Fe</name>
        <dbReference type="ChEBI" id="CHEBI:18248"/>
    </ligandPart>
</feature>
<feature type="binding site" description="axial binding residue" evidence="2">
    <location>
        <position position="97"/>
    </location>
    <ligand>
        <name>heme b</name>
        <dbReference type="ChEBI" id="CHEBI:60344"/>
        <label>b566</label>
    </ligand>
    <ligandPart>
        <name>Fe</name>
        <dbReference type="ChEBI" id="CHEBI:18248"/>
    </ligandPart>
</feature>
<feature type="binding site" description="axial binding residue" evidence="2">
    <location>
        <position position="182"/>
    </location>
    <ligand>
        <name>heme b</name>
        <dbReference type="ChEBI" id="CHEBI:60344"/>
        <label>b562</label>
    </ligand>
    <ligandPart>
        <name>Fe</name>
        <dbReference type="ChEBI" id="CHEBI:18248"/>
    </ligandPart>
</feature>
<feature type="binding site" description="axial binding residue" evidence="2">
    <location>
        <position position="196"/>
    </location>
    <ligand>
        <name>heme b</name>
        <dbReference type="ChEBI" id="CHEBI:60344"/>
        <label>b566</label>
    </ligand>
    <ligandPart>
        <name>Fe</name>
        <dbReference type="ChEBI" id="CHEBI:18248"/>
    </ligandPart>
</feature>
<feature type="binding site" evidence="2">
    <location>
        <position position="201"/>
    </location>
    <ligand>
        <name>a ubiquinone</name>
        <dbReference type="ChEBI" id="CHEBI:16389"/>
    </ligand>
</feature>
<accession>Q9TF32</accession>
<sequence length="379" mass="43112">MTNIRKTHPLIKIINHSFIDLPAPSNISAWWNFGSLLGICLIIQILTGLFLAMHYTSDTMTAFSSVTHICRDVNYGWLIRYMHANGASMFFICLFLHVGRGLYYGSYTYFETWNIGVILLFAVMATAFMGYVLPWGQMSFWGATVITNLLSAIPYIGTTLVXWIWGGXXVDKATLTRFFAFHFILPFIITALVMVHLXFLHETGSNNPSGLISDSDKIPFHPYYTIKDILGILLLMLVLMILVLFSPDLLGDPDNYTPANPLNTPPHIKPEWYFLFAYAILRSIPNKLGGVLALVLSILILMLFPILHMSKQRSMMFRPLSQCMFWILVADLFTLTWIGGQPVEYPFIIIGQLASILYFMIILLILPTISLFENKLLKW</sequence>
<protein>
    <recommendedName>
        <fullName>Cytochrome b</fullName>
    </recommendedName>
    <alternativeName>
        <fullName>Complex III subunit 3</fullName>
    </alternativeName>
    <alternativeName>
        <fullName>Complex III subunit III</fullName>
    </alternativeName>
    <alternativeName>
        <fullName>Cytochrome b-c1 complex subunit 3</fullName>
    </alternativeName>
    <alternativeName>
        <fullName>Ubiquinol-cytochrome-c reductase complex cytochrome b subunit</fullName>
    </alternativeName>
</protein>
<comment type="function">
    <text evidence="2">Component of the ubiquinol-cytochrome c reductase complex (complex III or cytochrome b-c1 complex) that is part of the mitochondrial respiratory chain. The b-c1 complex mediates electron transfer from ubiquinol to cytochrome c. Contributes to the generation of a proton gradient across the mitochondrial membrane that is then used for ATP synthesis.</text>
</comment>
<comment type="cofactor">
    <cofactor evidence="2">
        <name>heme b</name>
        <dbReference type="ChEBI" id="CHEBI:60344"/>
    </cofactor>
    <text evidence="2">Binds 2 heme b groups non-covalently.</text>
</comment>
<comment type="subunit">
    <text evidence="2">The cytochrome bc1 complex contains 11 subunits: 3 respiratory subunits (MT-CYB, CYC1 and UQCRFS1), 2 core proteins (UQCRC1 and UQCRC2) and 6 low-molecular weight proteins (UQCRH/QCR6, UQCRB/QCR7, UQCRQ/QCR8, UQCR10/QCR9, UQCR11/QCR10 and a cleavage product of UQCRFS1). This cytochrome bc1 complex then forms a dimer.</text>
</comment>
<comment type="subcellular location">
    <subcellularLocation>
        <location evidence="2">Mitochondrion inner membrane</location>
        <topology evidence="2">Multi-pass membrane protein</topology>
    </subcellularLocation>
</comment>
<comment type="miscellaneous">
    <text evidence="1">Heme 1 (or BL or b562) is low-potential and absorbs at about 562 nm, and heme 2 (or BH or b566) is high-potential and absorbs at about 566 nm.</text>
</comment>
<comment type="similarity">
    <text evidence="3 4">Belongs to the cytochrome b family.</text>
</comment>
<comment type="caution">
    <text evidence="2">The full-length protein contains only eight transmembrane helices, not nine as predicted by bioinformatics tools.</text>
</comment>
<organism>
    <name type="scientific">Tamias dorsalis</name>
    <name type="common">Cliff chipmunk</name>
    <name type="synonym">Eutamias dorsalis</name>
    <dbReference type="NCBI Taxonomy" id="45467"/>
    <lineage>
        <taxon>Eukaryota</taxon>
        <taxon>Metazoa</taxon>
        <taxon>Chordata</taxon>
        <taxon>Craniata</taxon>
        <taxon>Vertebrata</taxon>
        <taxon>Euteleostomi</taxon>
        <taxon>Mammalia</taxon>
        <taxon>Eutheria</taxon>
        <taxon>Euarchontoglires</taxon>
        <taxon>Glires</taxon>
        <taxon>Rodentia</taxon>
        <taxon>Sciuromorpha</taxon>
        <taxon>Sciuridae</taxon>
        <taxon>Xerinae</taxon>
        <taxon>Marmotini</taxon>
        <taxon>Tamias</taxon>
    </lineage>
</organism>
<proteinExistence type="inferred from homology"/>
<reference key="1">
    <citation type="submission" date="1999-06" db="EMBL/GenBank/DDBJ databases">
        <title>A molecular phylogeny of ground squirrels and prairie dogs.</title>
        <authorList>
            <person name="Harrison R.G."/>
            <person name="Sherman P.W."/>
            <person name="Yensen E."/>
            <person name="Hoffmann R.S."/>
            <person name="Bogdanowicz S.M."/>
        </authorList>
    </citation>
    <scope>NUCLEOTIDE SEQUENCE [GENOMIC DNA]</scope>
    <source>
        <strain>Isolate S76</strain>
    </source>
</reference>